<organism>
    <name type="scientific">Staphylococcus aureus (strain JH9)</name>
    <dbReference type="NCBI Taxonomy" id="359786"/>
    <lineage>
        <taxon>Bacteria</taxon>
        <taxon>Bacillati</taxon>
        <taxon>Bacillota</taxon>
        <taxon>Bacilli</taxon>
        <taxon>Bacillales</taxon>
        <taxon>Staphylococcaceae</taxon>
        <taxon>Staphylococcus</taxon>
    </lineage>
</organism>
<proteinExistence type="inferred from homology"/>
<evidence type="ECO:0000255" key="1">
    <source>
        <dbReference type="HAMAP-Rule" id="MF_01576"/>
    </source>
</evidence>
<gene>
    <name evidence="1" type="primary">folD</name>
    <name type="ordered locus">SaurJH9_1123</name>
</gene>
<name>FOLD_STAA9</name>
<dbReference type="EC" id="1.5.1.5" evidence="1"/>
<dbReference type="EC" id="3.5.4.9" evidence="1"/>
<dbReference type="EMBL" id="CP000703">
    <property type="protein sequence ID" value="ABQ48923.1"/>
    <property type="molecule type" value="Genomic_DNA"/>
</dbReference>
<dbReference type="RefSeq" id="WP_000225836.1">
    <property type="nucleotide sequence ID" value="NC_009487.1"/>
</dbReference>
<dbReference type="SMR" id="A5IRV0"/>
<dbReference type="KEGG" id="saj:SaurJH9_1123"/>
<dbReference type="HOGENOM" id="CLU_034045_2_1_9"/>
<dbReference type="UniPathway" id="UPA00193"/>
<dbReference type="GO" id="GO:0005829">
    <property type="term" value="C:cytosol"/>
    <property type="evidence" value="ECO:0007669"/>
    <property type="project" value="TreeGrafter"/>
</dbReference>
<dbReference type="GO" id="GO:0004477">
    <property type="term" value="F:methenyltetrahydrofolate cyclohydrolase activity"/>
    <property type="evidence" value="ECO:0007669"/>
    <property type="project" value="UniProtKB-UniRule"/>
</dbReference>
<dbReference type="GO" id="GO:0004488">
    <property type="term" value="F:methylenetetrahydrofolate dehydrogenase (NADP+) activity"/>
    <property type="evidence" value="ECO:0007669"/>
    <property type="project" value="UniProtKB-UniRule"/>
</dbReference>
<dbReference type="GO" id="GO:0000105">
    <property type="term" value="P:L-histidine biosynthetic process"/>
    <property type="evidence" value="ECO:0007669"/>
    <property type="project" value="UniProtKB-KW"/>
</dbReference>
<dbReference type="GO" id="GO:0009086">
    <property type="term" value="P:methionine biosynthetic process"/>
    <property type="evidence" value="ECO:0007669"/>
    <property type="project" value="UniProtKB-KW"/>
</dbReference>
<dbReference type="GO" id="GO:0006164">
    <property type="term" value="P:purine nucleotide biosynthetic process"/>
    <property type="evidence" value="ECO:0007669"/>
    <property type="project" value="UniProtKB-KW"/>
</dbReference>
<dbReference type="GO" id="GO:0035999">
    <property type="term" value="P:tetrahydrofolate interconversion"/>
    <property type="evidence" value="ECO:0007669"/>
    <property type="project" value="UniProtKB-UniRule"/>
</dbReference>
<dbReference type="CDD" id="cd01080">
    <property type="entry name" value="NAD_bind_m-THF_DH_Cyclohyd"/>
    <property type="match status" value="1"/>
</dbReference>
<dbReference type="FunFam" id="3.40.50.10860:FF:000001">
    <property type="entry name" value="Bifunctional protein FolD"/>
    <property type="match status" value="1"/>
</dbReference>
<dbReference type="FunFam" id="3.40.50.720:FF:000094">
    <property type="entry name" value="Bifunctional protein FolD"/>
    <property type="match status" value="1"/>
</dbReference>
<dbReference type="Gene3D" id="3.40.50.10860">
    <property type="entry name" value="Leucine Dehydrogenase, chain A, domain 1"/>
    <property type="match status" value="1"/>
</dbReference>
<dbReference type="Gene3D" id="3.40.50.720">
    <property type="entry name" value="NAD(P)-binding Rossmann-like Domain"/>
    <property type="match status" value="1"/>
</dbReference>
<dbReference type="HAMAP" id="MF_01576">
    <property type="entry name" value="THF_DHG_CYH"/>
    <property type="match status" value="1"/>
</dbReference>
<dbReference type="InterPro" id="IPR046346">
    <property type="entry name" value="Aminoacid_DH-like_N_sf"/>
</dbReference>
<dbReference type="InterPro" id="IPR036291">
    <property type="entry name" value="NAD(P)-bd_dom_sf"/>
</dbReference>
<dbReference type="InterPro" id="IPR000672">
    <property type="entry name" value="THF_DH/CycHdrlase"/>
</dbReference>
<dbReference type="InterPro" id="IPR020630">
    <property type="entry name" value="THF_DH/CycHdrlase_cat_dom"/>
</dbReference>
<dbReference type="InterPro" id="IPR020631">
    <property type="entry name" value="THF_DH/CycHdrlase_NAD-bd_dom"/>
</dbReference>
<dbReference type="NCBIfam" id="NF010772">
    <property type="entry name" value="PRK14175.1"/>
    <property type="match status" value="1"/>
</dbReference>
<dbReference type="PANTHER" id="PTHR48099:SF5">
    <property type="entry name" value="C-1-TETRAHYDROFOLATE SYNTHASE, CYTOPLASMIC"/>
    <property type="match status" value="1"/>
</dbReference>
<dbReference type="PANTHER" id="PTHR48099">
    <property type="entry name" value="C-1-TETRAHYDROFOLATE SYNTHASE, CYTOPLASMIC-RELATED"/>
    <property type="match status" value="1"/>
</dbReference>
<dbReference type="Pfam" id="PF00763">
    <property type="entry name" value="THF_DHG_CYH"/>
    <property type="match status" value="1"/>
</dbReference>
<dbReference type="Pfam" id="PF02882">
    <property type="entry name" value="THF_DHG_CYH_C"/>
    <property type="match status" value="1"/>
</dbReference>
<dbReference type="PRINTS" id="PR00085">
    <property type="entry name" value="THFDHDRGNASE"/>
</dbReference>
<dbReference type="SUPFAM" id="SSF53223">
    <property type="entry name" value="Aminoacid dehydrogenase-like, N-terminal domain"/>
    <property type="match status" value="1"/>
</dbReference>
<dbReference type="SUPFAM" id="SSF51735">
    <property type="entry name" value="NAD(P)-binding Rossmann-fold domains"/>
    <property type="match status" value="1"/>
</dbReference>
<protein>
    <recommendedName>
        <fullName evidence="1">Bifunctional protein FolD</fullName>
    </recommendedName>
    <domain>
        <recommendedName>
            <fullName evidence="1">Methylenetetrahydrofolate dehydrogenase</fullName>
            <ecNumber evidence="1">1.5.1.5</ecNumber>
        </recommendedName>
    </domain>
    <domain>
        <recommendedName>
            <fullName evidence="1">Methenyltetrahydrofolate cyclohydrolase</fullName>
            <ecNumber evidence="1">3.5.4.9</ecNumber>
        </recommendedName>
    </domain>
</protein>
<accession>A5IRV0</accession>
<keyword id="KW-0028">Amino-acid biosynthesis</keyword>
<keyword id="KW-0368">Histidine biosynthesis</keyword>
<keyword id="KW-0378">Hydrolase</keyword>
<keyword id="KW-0486">Methionine biosynthesis</keyword>
<keyword id="KW-0511">Multifunctional enzyme</keyword>
<keyword id="KW-0521">NADP</keyword>
<keyword id="KW-0554">One-carbon metabolism</keyword>
<keyword id="KW-0560">Oxidoreductase</keyword>
<keyword id="KW-0658">Purine biosynthesis</keyword>
<comment type="function">
    <text evidence="1">Catalyzes the oxidation of 5,10-methylenetetrahydrofolate to 5,10-methenyltetrahydrofolate and then the hydrolysis of 5,10-methenyltetrahydrofolate to 10-formyltetrahydrofolate.</text>
</comment>
<comment type="catalytic activity">
    <reaction evidence="1">
        <text>(6R)-5,10-methylene-5,6,7,8-tetrahydrofolate + NADP(+) = (6R)-5,10-methenyltetrahydrofolate + NADPH</text>
        <dbReference type="Rhea" id="RHEA:22812"/>
        <dbReference type="ChEBI" id="CHEBI:15636"/>
        <dbReference type="ChEBI" id="CHEBI:57455"/>
        <dbReference type="ChEBI" id="CHEBI:57783"/>
        <dbReference type="ChEBI" id="CHEBI:58349"/>
        <dbReference type="EC" id="1.5.1.5"/>
    </reaction>
</comment>
<comment type="catalytic activity">
    <reaction evidence="1">
        <text>(6R)-5,10-methenyltetrahydrofolate + H2O = (6R)-10-formyltetrahydrofolate + H(+)</text>
        <dbReference type="Rhea" id="RHEA:23700"/>
        <dbReference type="ChEBI" id="CHEBI:15377"/>
        <dbReference type="ChEBI" id="CHEBI:15378"/>
        <dbReference type="ChEBI" id="CHEBI:57455"/>
        <dbReference type="ChEBI" id="CHEBI:195366"/>
        <dbReference type="EC" id="3.5.4.9"/>
    </reaction>
</comment>
<comment type="pathway">
    <text evidence="1">One-carbon metabolism; tetrahydrofolate interconversion.</text>
</comment>
<comment type="subunit">
    <text evidence="1">Homodimer.</text>
</comment>
<comment type="similarity">
    <text evidence="1">Belongs to the tetrahydrofolate dehydrogenase/cyclohydrolase family.</text>
</comment>
<sequence length="286" mass="30888">MVAKILDGKQIAKDYRQGLQDQVEALKEKGFTPKLSVILVGNDGASQSYVRSKKKAAEKIGMISEIVHLEETATEEEVLNELNRLNNDDSVSGILVQVPLPKQVSEQKILEAINPEKDVDGFHPINIGKLYIDEQTFVPCTPLGIMEILKHADIDLEAKNAVVIGRSHIVGQPVSKLLLQKNASVTILHSRSKDMASYLKDADVIVSAVGKPSLVTKDVVKEGAVIIDVGNTPDENGKLKGDVDYDAVKEIAGAITPVPGGVGPLTITMVLNNTLLAEKMRRGIDS</sequence>
<feature type="chain" id="PRO_1000087923" description="Bifunctional protein FolD">
    <location>
        <begin position="1"/>
        <end position="286"/>
    </location>
</feature>
<feature type="binding site" evidence="1">
    <location>
        <begin position="165"/>
        <end position="167"/>
    </location>
    <ligand>
        <name>NADP(+)</name>
        <dbReference type="ChEBI" id="CHEBI:58349"/>
    </ligand>
</feature>
<feature type="binding site" evidence="1">
    <location>
        <position position="190"/>
    </location>
    <ligand>
        <name>NADP(+)</name>
        <dbReference type="ChEBI" id="CHEBI:58349"/>
    </ligand>
</feature>
<reference key="1">
    <citation type="submission" date="2007-05" db="EMBL/GenBank/DDBJ databases">
        <title>Complete sequence of chromosome of Staphylococcus aureus subsp. aureus JH9.</title>
        <authorList>
            <consortium name="US DOE Joint Genome Institute"/>
            <person name="Copeland A."/>
            <person name="Lucas S."/>
            <person name="Lapidus A."/>
            <person name="Barry K."/>
            <person name="Detter J.C."/>
            <person name="Glavina del Rio T."/>
            <person name="Hammon N."/>
            <person name="Israni S."/>
            <person name="Pitluck S."/>
            <person name="Chain P."/>
            <person name="Malfatti S."/>
            <person name="Shin M."/>
            <person name="Vergez L."/>
            <person name="Schmutz J."/>
            <person name="Larimer F."/>
            <person name="Land M."/>
            <person name="Hauser L."/>
            <person name="Kyrpides N."/>
            <person name="Kim E."/>
            <person name="Tomasz A."/>
            <person name="Richardson P."/>
        </authorList>
    </citation>
    <scope>NUCLEOTIDE SEQUENCE [LARGE SCALE GENOMIC DNA]</scope>
    <source>
        <strain>JH9</strain>
    </source>
</reference>